<reference key="1">
    <citation type="submission" date="2005-08" db="EMBL/GenBank/DDBJ databases">
        <title>Mus musculus testis-specific IQ motif containing protein 2.</title>
        <authorList>
            <person name="Nie D.-S."/>
            <person name="Liu Y."/>
            <person name="Lu G.-X."/>
        </authorList>
    </citation>
    <scope>NUCLEOTIDE SEQUENCE [MRNA]</scope>
    <source>
        <tissue>Testis</tissue>
    </source>
</reference>
<reference key="2">
    <citation type="journal article" date="2005" name="Science">
        <title>The transcriptional landscape of the mammalian genome.</title>
        <authorList>
            <person name="Carninci P."/>
            <person name="Kasukawa T."/>
            <person name="Katayama S."/>
            <person name="Gough J."/>
            <person name="Frith M.C."/>
            <person name="Maeda N."/>
            <person name="Oyama R."/>
            <person name="Ravasi T."/>
            <person name="Lenhard B."/>
            <person name="Wells C."/>
            <person name="Kodzius R."/>
            <person name="Shimokawa K."/>
            <person name="Bajic V.B."/>
            <person name="Brenner S.E."/>
            <person name="Batalov S."/>
            <person name="Forrest A.R."/>
            <person name="Zavolan M."/>
            <person name="Davis M.J."/>
            <person name="Wilming L.G."/>
            <person name="Aidinis V."/>
            <person name="Allen J.E."/>
            <person name="Ambesi-Impiombato A."/>
            <person name="Apweiler R."/>
            <person name="Aturaliya R.N."/>
            <person name="Bailey T.L."/>
            <person name="Bansal M."/>
            <person name="Baxter L."/>
            <person name="Beisel K.W."/>
            <person name="Bersano T."/>
            <person name="Bono H."/>
            <person name="Chalk A.M."/>
            <person name="Chiu K.P."/>
            <person name="Choudhary V."/>
            <person name="Christoffels A."/>
            <person name="Clutterbuck D.R."/>
            <person name="Crowe M.L."/>
            <person name="Dalla E."/>
            <person name="Dalrymple B.P."/>
            <person name="de Bono B."/>
            <person name="Della Gatta G."/>
            <person name="di Bernardo D."/>
            <person name="Down T."/>
            <person name="Engstrom P."/>
            <person name="Fagiolini M."/>
            <person name="Faulkner G."/>
            <person name="Fletcher C.F."/>
            <person name="Fukushima T."/>
            <person name="Furuno M."/>
            <person name="Futaki S."/>
            <person name="Gariboldi M."/>
            <person name="Georgii-Hemming P."/>
            <person name="Gingeras T.R."/>
            <person name="Gojobori T."/>
            <person name="Green R.E."/>
            <person name="Gustincich S."/>
            <person name="Harbers M."/>
            <person name="Hayashi Y."/>
            <person name="Hensch T.K."/>
            <person name="Hirokawa N."/>
            <person name="Hill D."/>
            <person name="Huminiecki L."/>
            <person name="Iacono M."/>
            <person name="Ikeo K."/>
            <person name="Iwama A."/>
            <person name="Ishikawa T."/>
            <person name="Jakt M."/>
            <person name="Kanapin A."/>
            <person name="Katoh M."/>
            <person name="Kawasawa Y."/>
            <person name="Kelso J."/>
            <person name="Kitamura H."/>
            <person name="Kitano H."/>
            <person name="Kollias G."/>
            <person name="Krishnan S.P."/>
            <person name="Kruger A."/>
            <person name="Kummerfeld S.K."/>
            <person name="Kurochkin I.V."/>
            <person name="Lareau L.F."/>
            <person name="Lazarevic D."/>
            <person name="Lipovich L."/>
            <person name="Liu J."/>
            <person name="Liuni S."/>
            <person name="McWilliam S."/>
            <person name="Madan Babu M."/>
            <person name="Madera M."/>
            <person name="Marchionni L."/>
            <person name="Matsuda H."/>
            <person name="Matsuzawa S."/>
            <person name="Miki H."/>
            <person name="Mignone F."/>
            <person name="Miyake S."/>
            <person name="Morris K."/>
            <person name="Mottagui-Tabar S."/>
            <person name="Mulder N."/>
            <person name="Nakano N."/>
            <person name="Nakauchi H."/>
            <person name="Ng P."/>
            <person name="Nilsson R."/>
            <person name="Nishiguchi S."/>
            <person name="Nishikawa S."/>
            <person name="Nori F."/>
            <person name="Ohara O."/>
            <person name="Okazaki Y."/>
            <person name="Orlando V."/>
            <person name="Pang K.C."/>
            <person name="Pavan W.J."/>
            <person name="Pavesi G."/>
            <person name="Pesole G."/>
            <person name="Petrovsky N."/>
            <person name="Piazza S."/>
            <person name="Reed J."/>
            <person name="Reid J.F."/>
            <person name="Ring B.Z."/>
            <person name="Ringwald M."/>
            <person name="Rost B."/>
            <person name="Ruan Y."/>
            <person name="Salzberg S.L."/>
            <person name="Sandelin A."/>
            <person name="Schneider C."/>
            <person name="Schoenbach C."/>
            <person name="Sekiguchi K."/>
            <person name="Semple C.A."/>
            <person name="Seno S."/>
            <person name="Sessa L."/>
            <person name="Sheng Y."/>
            <person name="Shibata Y."/>
            <person name="Shimada H."/>
            <person name="Shimada K."/>
            <person name="Silva D."/>
            <person name="Sinclair B."/>
            <person name="Sperling S."/>
            <person name="Stupka E."/>
            <person name="Sugiura K."/>
            <person name="Sultana R."/>
            <person name="Takenaka Y."/>
            <person name="Taki K."/>
            <person name="Tammoja K."/>
            <person name="Tan S.L."/>
            <person name="Tang S."/>
            <person name="Taylor M.S."/>
            <person name="Tegner J."/>
            <person name="Teichmann S.A."/>
            <person name="Ueda H.R."/>
            <person name="van Nimwegen E."/>
            <person name="Verardo R."/>
            <person name="Wei C.L."/>
            <person name="Yagi K."/>
            <person name="Yamanishi H."/>
            <person name="Zabarovsky E."/>
            <person name="Zhu S."/>
            <person name="Zimmer A."/>
            <person name="Hide W."/>
            <person name="Bult C."/>
            <person name="Grimmond S.M."/>
            <person name="Teasdale R.D."/>
            <person name="Liu E.T."/>
            <person name="Brusic V."/>
            <person name="Quackenbush J."/>
            <person name="Wahlestedt C."/>
            <person name="Mattick J.S."/>
            <person name="Hume D.A."/>
            <person name="Kai C."/>
            <person name="Sasaki D."/>
            <person name="Tomaru Y."/>
            <person name="Fukuda S."/>
            <person name="Kanamori-Katayama M."/>
            <person name="Suzuki M."/>
            <person name="Aoki J."/>
            <person name="Arakawa T."/>
            <person name="Iida J."/>
            <person name="Imamura K."/>
            <person name="Itoh M."/>
            <person name="Kato T."/>
            <person name="Kawaji H."/>
            <person name="Kawagashira N."/>
            <person name="Kawashima T."/>
            <person name="Kojima M."/>
            <person name="Kondo S."/>
            <person name="Konno H."/>
            <person name="Nakano K."/>
            <person name="Ninomiya N."/>
            <person name="Nishio T."/>
            <person name="Okada M."/>
            <person name="Plessy C."/>
            <person name="Shibata K."/>
            <person name="Shiraki T."/>
            <person name="Suzuki S."/>
            <person name="Tagami M."/>
            <person name="Waki K."/>
            <person name="Watahiki A."/>
            <person name="Okamura-Oho Y."/>
            <person name="Suzuki H."/>
            <person name="Kawai J."/>
            <person name="Hayashizaki Y."/>
        </authorList>
    </citation>
    <scope>NUCLEOTIDE SEQUENCE [LARGE SCALE MRNA]</scope>
    <source>
        <strain>C57BL/6J</strain>
        <tissue>Testis</tissue>
    </source>
</reference>
<reference key="3">
    <citation type="journal article" date="2004" name="Genome Res.">
        <title>The status, quality, and expansion of the NIH full-length cDNA project: the Mammalian Gene Collection (MGC).</title>
        <authorList>
            <consortium name="The MGC Project Team"/>
        </authorList>
    </citation>
    <scope>NUCLEOTIDE SEQUENCE [LARGE SCALE MRNA]</scope>
    <source>
        <tissue>Testis</tissue>
    </source>
</reference>
<proteinExistence type="evidence at transcript level"/>
<organism>
    <name type="scientific">Mus musculus</name>
    <name type="common">Mouse</name>
    <dbReference type="NCBI Taxonomy" id="10090"/>
    <lineage>
        <taxon>Eukaryota</taxon>
        <taxon>Metazoa</taxon>
        <taxon>Chordata</taxon>
        <taxon>Craniata</taxon>
        <taxon>Vertebrata</taxon>
        <taxon>Euteleostomi</taxon>
        <taxon>Mammalia</taxon>
        <taxon>Eutheria</taxon>
        <taxon>Euarchontoglires</taxon>
        <taxon>Glires</taxon>
        <taxon>Rodentia</taxon>
        <taxon>Myomorpha</taxon>
        <taxon>Muroidea</taxon>
        <taxon>Muridae</taxon>
        <taxon>Murinae</taxon>
        <taxon>Mus</taxon>
        <taxon>Mus</taxon>
    </lineage>
</organism>
<feature type="chain" id="PRO_0000339382" description="IQ domain-containing protein F3">
    <location>
        <begin position="1"/>
        <end position="203"/>
    </location>
</feature>
<feature type="domain" description="IQ">
    <location>
        <begin position="129"/>
        <end position="158"/>
    </location>
</feature>
<feature type="region of interest" description="Disordered" evidence="2">
    <location>
        <begin position="1"/>
        <end position="111"/>
    </location>
</feature>
<feature type="coiled-coil region" evidence="1">
    <location>
        <begin position="13"/>
        <end position="82"/>
    </location>
</feature>
<feature type="compositionally biased region" description="Basic and acidic residues" evidence="2">
    <location>
        <begin position="1"/>
        <end position="12"/>
    </location>
</feature>
<feature type="compositionally biased region" description="Acidic residues" evidence="2">
    <location>
        <begin position="29"/>
        <end position="38"/>
    </location>
</feature>
<feature type="compositionally biased region" description="Basic and acidic residues" evidence="2">
    <location>
        <begin position="39"/>
        <end position="51"/>
    </location>
</feature>
<feature type="compositionally biased region" description="Acidic residues" evidence="2">
    <location>
        <begin position="64"/>
        <end position="73"/>
    </location>
</feature>
<feature type="compositionally biased region" description="Basic and acidic residues" evidence="2">
    <location>
        <begin position="74"/>
        <end position="86"/>
    </location>
</feature>
<feature type="compositionally biased region" description="Basic and acidic residues" evidence="2">
    <location>
        <begin position="96"/>
        <end position="111"/>
    </location>
</feature>
<accession>Q9D498</accession>
<evidence type="ECO:0000255" key="1"/>
<evidence type="ECO:0000256" key="2">
    <source>
        <dbReference type="SAM" id="MobiDB-lite"/>
    </source>
</evidence>
<sequence length="203" mass="23500">MELDQDKKKETPEETENVNEVQLEKQNQDEETEAEAEEADKAILERSDSVKTECPPQAEKQNQDEETEAEAEEADKAILERSDSVKTECPPQAEKQIQEEKCETQEADRSEGTELGKLHSQLDQLPDNVMLAGVKIQAWWRGTLVRRTLLLAALNAWTIQCWWREAKARLQGRKLHEVMRYRLRNLNLKSISKRKQPNQSSFL</sequence>
<keyword id="KW-0175">Coiled coil</keyword>
<keyword id="KW-1185">Reference proteome</keyword>
<protein>
    <recommendedName>
        <fullName>IQ domain-containing protein F3</fullName>
    </recommendedName>
    <alternativeName>
        <fullName>Testis-specific IQ motif-containing protein 2</fullName>
    </alternativeName>
</protein>
<dbReference type="EMBL" id="DQ153247">
    <property type="protein sequence ID" value="AAZ78215.1"/>
    <property type="molecule type" value="mRNA"/>
</dbReference>
<dbReference type="EMBL" id="AK016688">
    <property type="protein sequence ID" value="BAB30380.1"/>
    <property type="molecule type" value="mRNA"/>
</dbReference>
<dbReference type="EMBL" id="AK132739">
    <property type="protein sequence ID" value="BAE21327.1"/>
    <property type="molecule type" value="mRNA"/>
</dbReference>
<dbReference type="EMBL" id="BC049549">
    <property type="protein sequence ID" value="AAH49549.1"/>
    <property type="molecule type" value="mRNA"/>
</dbReference>
<dbReference type="CCDS" id="CCDS40758.1"/>
<dbReference type="RefSeq" id="NP_080921.2">
    <property type="nucleotide sequence ID" value="NM_026645.3"/>
</dbReference>
<dbReference type="SMR" id="Q9D498"/>
<dbReference type="STRING" id="10090.ENSMUSP00000054276"/>
<dbReference type="PhosphoSitePlus" id="Q9D498"/>
<dbReference type="SwissPalm" id="Q9D498"/>
<dbReference type="PaxDb" id="10090-ENSMUSP00000054276"/>
<dbReference type="ProteomicsDB" id="269502"/>
<dbReference type="DNASU" id="68265"/>
<dbReference type="Ensembl" id="ENSMUST00010126032.3">
    <property type="protein sequence ID" value="ENSMUSP00001068197.1"/>
    <property type="gene ID" value="ENSMUSG00001074846.1"/>
</dbReference>
<dbReference type="GeneID" id="68265"/>
<dbReference type="KEGG" id="mmu:68265"/>
<dbReference type="UCSC" id="uc009rkg.1">
    <property type="organism name" value="mouse"/>
</dbReference>
<dbReference type="AGR" id="MGI:1915515"/>
<dbReference type="CTD" id="401067"/>
<dbReference type="MGI" id="MGI:1915515">
    <property type="gene designation" value="Iqcf3"/>
</dbReference>
<dbReference type="VEuPathDB" id="HostDB:ENSMUSG00000118396"/>
<dbReference type="GeneTree" id="ENSGT00390000004641"/>
<dbReference type="InParanoid" id="Q9D498"/>
<dbReference type="OrthoDB" id="9837193at2759"/>
<dbReference type="TreeFam" id="TF337908"/>
<dbReference type="BioGRID-ORCS" id="68265">
    <property type="hits" value="1 hit in 76 CRISPR screens"/>
</dbReference>
<dbReference type="ChiTaRS" id="Iqcf3">
    <property type="organism name" value="mouse"/>
</dbReference>
<dbReference type="PRO" id="PR:Q9D498"/>
<dbReference type="Proteomes" id="UP000000589">
    <property type="component" value="Chromosome 9"/>
</dbReference>
<dbReference type="RNAct" id="Q9D498">
    <property type="molecule type" value="protein"/>
</dbReference>
<dbReference type="Bgee" id="ENSMUSG00000118396">
    <property type="expression patterns" value="Expressed in seminiferous tubule of testis and 46 other cell types or tissues"/>
</dbReference>
<dbReference type="ExpressionAtlas" id="Q9D498">
    <property type="expression patterns" value="baseline and differential"/>
</dbReference>
<dbReference type="FunFam" id="1.20.5.190:FF:000014">
    <property type="entry name" value="IQ motif containing F5"/>
    <property type="match status" value="1"/>
</dbReference>
<dbReference type="Gene3D" id="1.20.5.190">
    <property type="match status" value="1"/>
</dbReference>
<dbReference type="InterPro" id="IPR000048">
    <property type="entry name" value="IQ_motif_EF-hand-BS"/>
</dbReference>
<dbReference type="InterPro" id="IPR039887">
    <property type="entry name" value="IQCF"/>
</dbReference>
<dbReference type="PANTHER" id="PTHR21633">
    <property type="entry name" value="IQ MOTIF CONTAINING F"/>
    <property type="match status" value="1"/>
</dbReference>
<dbReference type="PANTHER" id="PTHR21633:SF10">
    <property type="entry name" value="IQ MOTIF CONTAINING F4"/>
    <property type="match status" value="1"/>
</dbReference>
<dbReference type="Pfam" id="PF00612">
    <property type="entry name" value="IQ"/>
    <property type="match status" value="1"/>
</dbReference>
<name>IQCF3_MOUSE</name>
<gene>
    <name type="primary">Iqcf3</name>
</gene>